<evidence type="ECO:0000250" key="1"/>
<evidence type="ECO:0000256" key="2">
    <source>
        <dbReference type="SAM" id="MobiDB-lite"/>
    </source>
</evidence>
<evidence type="ECO:0000269" key="3">
    <source>
    </source>
</evidence>
<feature type="chain" id="PRO_0000135212" description="Signal recognition particle subunit SEC65">
    <location>
        <begin position="1"/>
        <end position="273"/>
    </location>
</feature>
<feature type="region of interest" description="Disordered" evidence="2">
    <location>
        <begin position="25"/>
        <end position="71"/>
    </location>
</feature>
<feature type="compositionally biased region" description="Low complexity" evidence="2">
    <location>
        <begin position="55"/>
        <end position="65"/>
    </location>
</feature>
<gene>
    <name type="primary">SEC65</name>
    <name type="ordered locus">YML105C</name>
    <name type="ORF">YM8339.14C</name>
</gene>
<accession>P29478</accession>
<accession>D6W0H9</accession>
<protein>
    <recommendedName>
        <fullName>Signal recognition particle subunit SEC65</fullName>
    </recommendedName>
</protein>
<keyword id="KW-0963">Cytoplasm</keyword>
<keyword id="KW-1185">Reference proteome</keyword>
<keyword id="KW-0687">Ribonucleoprotein</keyword>
<keyword id="KW-0733">Signal recognition particle</keyword>
<reference key="1">
    <citation type="journal article" date="1992" name="Nature">
        <title>The S. cerevisiae SEC65 gene encodes a component of yeast signal recognition particle with homology to human SRP19.</title>
        <authorList>
            <person name="Stirling C.J."/>
            <person name="Hewitt E.W."/>
        </authorList>
    </citation>
    <scope>NUCLEOTIDE SEQUENCE [GENOMIC DNA]</scope>
</reference>
<reference key="2">
    <citation type="journal article" date="1997" name="Nature">
        <title>The nucleotide sequence of Saccharomyces cerevisiae chromosome XIII.</title>
        <authorList>
            <person name="Bowman S."/>
            <person name="Churcher C.M."/>
            <person name="Badcock K."/>
            <person name="Brown D."/>
            <person name="Chillingworth T."/>
            <person name="Connor R."/>
            <person name="Dedman K."/>
            <person name="Devlin K."/>
            <person name="Gentles S."/>
            <person name="Hamlin N."/>
            <person name="Hunt S."/>
            <person name="Jagels K."/>
            <person name="Lye G."/>
            <person name="Moule S."/>
            <person name="Odell C."/>
            <person name="Pearson D."/>
            <person name="Rajandream M.A."/>
            <person name="Rice P."/>
            <person name="Skelton J."/>
            <person name="Walsh S.V."/>
            <person name="Whitehead S."/>
            <person name="Barrell B.G."/>
        </authorList>
    </citation>
    <scope>NUCLEOTIDE SEQUENCE [LARGE SCALE GENOMIC DNA]</scope>
    <source>
        <strain>ATCC 204508 / S288c</strain>
    </source>
</reference>
<reference key="3">
    <citation type="journal article" date="2014" name="G3 (Bethesda)">
        <title>The reference genome sequence of Saccharomyces cerevisiae: Then and now.</title>
        <authorList>
            <person name="Engel S.R."/>
            <person name="Dietrich F.S."/>
            <person name="Fisk D.G."/>
            <person name="Binkley G."/>
            <person name="Balakrishnan R."/>
            <person name="Costanzo M.C."/>
            <person name="Dwight S.S."/>
            <person name="Hitz B.C."/>
            <person name="Karra K."/>
            <person name="Nash R.S."/>
            <person name="Weng S."/>
            <person name="Wong E.D."/>
            <person name="Lloyd P."/>
            <person name="Skrzypek M.S."/>
            <person name="Miyasato S.R."/>
            <person name="Simison M."/>
            <person name="Cherry J.M."/>
        </authorList>
    </citation>
    <scope>GENOME REANNOTATION</scope>
    <source>
        <strain>ATCC 204508 / S288c</strain>
    </source>
</reference>
<reference key="4">
    <citation type="journal article" date="2007" name="Genome Res.">
        <title>Approaching a complete repository of sequence-verified protein-encoding clones for Saccharomyces cerevisiae.</title>
        <authorList>
            <person name="Hu Y."/>
            <person name="Rolfs A."/>
            <person name="Bhullar B."/>
            <person name="Murthy T.V.S."/>
            <person name="Zhu C."/>
            <person name="Berger M.F."/>
            <person name="Camargo A.A."/>
            <person name="Kelley F."/>
            <person name="McCarron S."/>
            <person name="Jepson D."/>
            <person name="Richardson A."/>
            <person name="Raphael J."/>
            <person name="Moreira D."/>
            <person name="Taycher E."/>
            <person name="Zuo D."/>
            <person name="Mohr S."/>
            <person name="Kane M.F."/>
            <person name="Williamson J."/>
            <person name="Simpson A.J.G."/>
            <person name="Bulyk M.L."/>
            <person name="Harlow E."/>
            <person name="Marsischky G."/>
            <person name="Kolodner R.D."/>
            <person name="LaBaer J."/>
        </authorList>
    </citation>
    <scope>NUCLEOTIDE SEQUENCE [GENOMIC DNA]</scope>
    <source>
        <strain>ATCC 204508 / S288c</strain>
    </source>
</reference>
<reference key="5">
    <citation type="journal article" date="1992" name="Nature">
        <title>SEC65 gene product is a subunit of the yeast signal recognition particle required for its integrity.</title>
        <authorList>
            <person name="Hann B.C."/>
            <person name="Stirling C.J."/>
            <person name="Walter P."/>
        </authorList>
    </citation>
    <scope>CHARACTERIZATION</scope>
</reference>
<reference key="6">
    <citation type="journal article" date="1994" name="EMBO J.">
        <title>Subunits of the Saccharomyces cerevisiae signal recognition particle required for its functional expression.</title>
        <authorList>
            <person name="Brown J.D."/>
            <person name="Hann B.C."/>
            <person name="Medzihradszky K.F."/>
            <person name="Niwa M."/>
            <person name="Burlingame A.L."/>
            <person name="Walter P."/>
        </authorList>
    </citation>
    <scope>IDENTIFICATION IN THE SRP COMPLEX</scope>
</reference>
<sequence>MPRLEEIDDFNDIDDLDMELAELDPSLRTPIAPKITPKVVRSQDQENPAFLPGTNNNSNSNNNSSNEKEQLSFINPKTGKVERSEAISKKDLEEVKRFQVLYPCYFDINRSHKEGRRVPKELAVENPLAKTMADAVRELGILCIFEGEKCHPQDFGNPGRIRVLFKENGQLIGAATKFKGGKRQLMKAVGEYMKRHPTTIESLREIPYGPDFDNIEFKKIPRVKGFKMNEIVPLHSPFLMGHPMTKSVYETPKITAAEKSFKPPKNKYKVVRR</sequence>
<proteinExistence type="evidence at protein level"/>
<dbReference type="EMBL" id="X65783">
    <property type="protein sequence ID" value="CAA46666.1"/>
    <property type="molecule type" value="Genomic_DNA"/>
</dbReference>
<dbReference type="EMBL" id="Z49210">
    <property type="protein sequence ID" value="CAA89113.1"/>
    <property type="molecule type" value="Genomic_DNA"/>
</dbReference>
<dbReference type="EMBL" id="AY693145">
    <property type="protein sequence ID" value="AAT93164.1"/>
    <property type="molecule type" value="Genomic_DNA"/>
</dbReference>
<dbReference type="EMBL" id="BK006946">
    <property type="protein sequence ID" value="DAA09793.1"/>
    <property type="molecule type" value="Genomic_DNA"/>
</dbReference>
<dbReference type="PIR" id="S21731">
    <property type="entry name" value="S21731"/>
</dbReference>
<dbReference type="RefSeq" id="NP_013602.1">
    <property type="nucleotide sequence ID" value="NM_001182467.1"/>
</dbReference>
<dbReference type="SMR" id="P29478"/>
<dbReference type="BioGRID" id="35038">
    <property type="interactions" value="399"/>
</dbReference>
<dbReference type="ComplexPortal" id="CPX-609">
    <property type="entry name" value="Signal recognition particle"/>
</dbReference>
<dbReference type="DIP" id="DIP-3850N"/>
<dbReference type="FunCoup" id="P29478">
    <property type="interactions" value="104"/>
</dbReference>
<dbReference type="IntAct" id="P29478">
    <property type="interactions" value="16"/>
</dbReference>
<dbReference type="MINT" id="P29478"/>
<dbReference type="STRING" id="4932.YML105C"/>
<dbReference type="iPTMnet" id="P29478"/>
<dbReference type="PaxDb" id="4932-YML105C"/>
<dbReference type="PeptideAtlas" id="P29478"/>
<dbReference type="EnsemblFungi" id="YML105C_mRNA">
    <property type="protein sequence ID" value="YML105C"/>
    <property type="gene ID" value="YML105C"/>
</dbReference>
<dbReference type="GeneID" id="854866"/>
<dbReference type="KEGG" id="sce:YML105C"/>
<dbReference type="AGR" id="SGD:S000004573"/>
<dbReference type="SGD" id="S000004573">
    <property type="gene designation" value="SEC65"/>
</dbReference>
<dbReference type="VEuPathDB" id="FungiDB:YML105C"/>
<dbReference type="eggNOG" id="KOG3198">
    <property type="taxonomic scope" value="Eukaryota"/>
</dbReference>
<dbReference type="GeneTree" id="ENSGT00390000004950"/>
<dbReference type="HOGENOM" id="CLU_065433_1_1_1"/>
<dbReference type="InParanoid" id="P29478"/>
<dbReference type="OMA" id="IPKVKGF"/>
<dbReference type="OrthoDB" id="2190947at2759"/>
<dbReference type="BioCyc" id="YEAST:G3O-32689-MONOMER"/>
<dbReference type="Reactome" id="R-SCE-1799339">
    <property type="pathway name" value="SRP-dependent cotranslational protein targeting to membrane"/>
</dbReference>
<dbReference type="BioGRID-ORCS" id="854866">
    <property type="hits" value="8 hits in 10 CRISPR screens"/>
</dbReference>
<dbReference type="PRO" id="PR:P29478"/>
<dbReference type="Proteomes" id="UP000002311">
    <property type="component" value="Chromosome XIII"/>
</dbReference>
<dbReference type="RNAct" id="P29478">
    <property type="molecule type" value="protein"/>
</dbReference>
<dbReference type="GO" id="GO:0005786">
    <property type="term" value="C:signal recognition particle, endoplasmic reticulum targeting"/>
    <property type="evidence" value="ECO:0000314"/>
    <property type="project" value="SGD"/>
</dbReference>
<dbReference type="GO" id="GO:0008312">
    <property type="term" value="F:7S RNA binding"/>
    <property type="evidence" value="ECO:0000314"/>
    <property type="project" value="SGD"/>
</dbReference>
<dbReference type="GO" id="GO:0006614">
    <property type="term" value="P:SRP-dependent cotranslational protein targeting to membrane"/>
    <property type="evidence" value="ECO:0000314"/>
    <property type="project" value="SGD"/>
</dbReference>
<dbReference type="GO" id="GO:0006617">
    <property type="term" value="P:SRP-dependent cotranslational protein targeting to membrane, signal sequence recognition"/>
    <property type="evidence" value="ECO:0000315"/>
    <property type="project" value="SGD"/>
</dbReference>
<dbReference type="FunFam" id="3.30.56.30:FF:000003">
    <property type="entry name" value="Signal recognition particle SEC65 subunit"/>
    <property type="match status" value="1"/>
</dbReference>
<dbReference type="Gene3D" id="3.30.56.30">
    <property type="entry name" value="Signal recognition particle, SRP19-like subunit"/>
    <property type="match status" value="1"/>
</dbReference>
<dbReference type="HAMAP" id="MF_00305">
    <property type="entry name" value="SRP19"/>
    <property type="match status" value="1"/>
</dbReference>
<dbReference type="InterPro" id="IPR002778">
    <property type="entry name" value="Signal_recog_particle_SRP19"/>
</dbReference>
<dbReference type="InterPro" id="IPR036521">
    <property type="entry name" value="SRP19-like_sf"/>
</dbReference>
<dbReference type="InterPro" id="IPR022938">
    <property type="entry name" value="SRP19_arc-type"/>
</dbReference>
<dbReference type="PANTHER" id="PTHR17453">
    <property type="entry name" value="SIGNAL RECOGNITION PARTICLE 19 KD PROTEIN"/>
    <property type="match status" value="1"/>
</dbReference>
<dbReference type="PANTHER" id="PTHR17453:SF0">
    <property type="entry name" value="SIGNAL RECOGNITION PARTICLE 19 KDA PROTEIN"/>
    <property type="match status" value="1"/>
</dbReference>
<dbReference type="Pfam" id="PF01922">
    <property type="entry name" value="SRP19"/>
    <property type="match status" value="1"/>
</dbReference>
<dbReference type="SUPFAM" id="SSF69695">
    <property type="entry name" value="SRP19"/>
    <property type="match status" value="1"/>
</dbReference>
<organism>
    <name type="scientific">Saccharomyces cerevisiae (strain ATCC 204508 / S288c)</name>
    <name type="common">Baker's yeast</name>
    <dbReference type="NCBI Taxonomy" id="559292"/>
    <lineage>
        <taxon>Eukaryota</taxon>
        <taxon>Fungi</taxon>
        <taxon>Dikarya</taxon>
        <taxon>Ascomycota</taxon>
        <taxon>Saccharomycotina</taxon>
        <taxon>Saccharomycetes</taxon>
        <taxon>Saccharomycetales</taxon>
        <taxon>Saccharomycetaceae</taxon>
        <taxon>Saccharomyces</taxon>
    </lineage>
</organism>
<comment type="function">
    <text>Signal-recognition-particle (SRP) assembly has a crucial role in targeting secretory proteins to the rough endoplasmic reticulum (ER) membrane. SRP is required for the cotranslational protein translocation for ER import and preferentially recognizes strongly hydrophobic signal sequences. It is involved in targeting the nascent chain-ribosome (RNC) complex to the ER and is proposed to participate in the arrest of nascent chain elongation during membrane targeting. SEC65 is required for SRP integrity.</text>
</comment>
<comment type="subunit">
    <text evidence="3">Fungal signal recognition particle (SRP) complex consists of a 7S RNA molecule (scR1) and at least six protein subunits: SRP72, SRP68, SRP54, SEC65, SRP21 and SRP14.</text>
</comment>
<comment type="interaction">
    <interactant intactId="EBI-16641">
        <id>P29478</id>
    </interactant>
    <interactant intactId="EBI-17977">
        <id>P38985</id>
        <label>SRP14</label>
    </interactant>
    <organismsDiffer>false</organismsDiffer>
    <experiments>8</experiments>
</comment>
<comment type="interaction">
    <interactant intactId="EBI-16641">
        <id>P29478</id>
    </interactant>
    <interactant intactId="EBI-17984">
        <id>P32342</id>
        <label>SRP21</label>
    </interactant>
    <organismsDiffer>false</organismsDiffer>
    <experiments>6</experiments>
</comment>
<comment type="interaction">
    <interactant intactId="EBI-16641">
        <id>P29478</id>
    </interactant>
    <interactant intactId="EBI-18011">
        <id>P38688</id>
        <label>SRP72</label>
    </interactant>
    <organismsDiffer>false</organismsDiffer>
    <experiments>9</experiments>
</comment>
<comment type="subcellular location">
    <subcellularLocation>
        <location evidence="1">Cytoplasm</location>
    </subcellularLocation>
</comment>
<name>SEC65_YEAST</name>